<keyword id="KW-1185">Reference proteome</keyword>
<accession>P09046</accession>
<accession>Q779N3</accession>
<name>NS3A_CVPPU</name>
<protein>
    <recommendedName>
        <fullName>Non-structural protein 3a</fullName>
        <shortName>ns3a</shortName>
    </recommendedName>
    <alternativeName>
        <fullName>Accessory protein 3a</fullName>
    </alternativeName>
    <alternativeName>
        <fullName>X2a protein</fullName>
    </alternativeName>
</protein>
<sequence>MDIVKSIYTSVDAVLDELDCAYFAVTLKVEFKTGKLLVCIGFGDTLLAAKDKAYAKLGLSIIEEVNSHIVV</sequence>
<organismHost>
    <name type="scientific">Sus scrofa</name>
    <name type="common">Pig</name>
    <dbReference type="NCBI Taxonomy" id="9823"/>
</organismHost>
<gene>
    <name type="ORF">3a</name>
</gene>
<proteinExistence type="predicted"/>
<organism>
    <name type="scientific">Porcine transmissible gastroenteritis coronavirus (strain Purdue)</name>
    <name type="common">TGEV</name>
    <dbReference type="NCBI Taxonomy" id="11151"/>
    <lineage>
        <taxon>Viruses</taxon>
        <taxon>Riboviria</taxon>
        <taxon>Orthornavirae</taxon>
        <taxon>Pisuviricota</taxon>
        <taxon>Pisoniviricetes</taxon>
        <taxon>Nidovirales</taxon>
        <taxon>Cornidovirineae</taxon>
        <taxon>Coronaviridae</taxon>
        <taxon>Orthocoronavirinae</taxon>
        <taxon>Alphacoronavirus</taxon>
        <taxon>Tegacovirus</taxon>
        <taxon>Alphacoronavirus 1</taxon>
    </lineage>
</organism>
<feature type="chain" id="PRO_0000106102" description="Non-structural protein 3a">
    <location>
        <begin position="1"/>
        <end position="71"/>
    </location>
</feature>
<dbReference type="EMBL" id="X06371">
    <property type="protein sequence ID" value="CAA29670.1"/>
    <property type="molecule type" value="Genomic_RNA"/>
</dbReference>
<dbReference type="EMBL" id="X12800">
    <property type="protein sequence ID" value="CAA31286.1"/>
    <property type="molecule type" value="Genomic_RNA"/>
</dbReference>
<dbReference type="EMBL" id="AJ271965">
    <property type="protein sequence ID" value="CAB91146.1"/>
    <property type="molecule type" value="Genomic_RNA"/>
</dbReference>
<dbReference type="EMBL" id="DQ443743">
    <property type="protein sequence ID" value="ABD97836.1"/>
    <property type="molecule type" value="Genomic_RNA"/>
</dbReference>
<dbReference type="PIR" id="S01739">
    <property type="entry name" value="S01739"/>
</dbReference>
<dbReference type="Proteomes" id="UP000001440">
    <property type="component" value="Segment"/>
</dbReference>
<dbReference type="Proteomes" id="UP000158504">
    <property type="component" value="Genome"/>
</dbReference>
<dbReference type="InterPro" id="IPR006784">
    <property type="entry name" value="Coronavirus_Orf3"/>
</dbReference>
<dbReference type="Pfam" id="PF04694">
    <property type="entry name" value="Corona_3"/>
    <property type="match status" value="1"/>
</dbReference>
<reference key="1">
    <citation type="journal article" date="1987" name="Biochimie">
        <title>Enteric coronavirus TGEV: partial sequence of the genomic RNA, its organization and expression.</title>
        <authorList>
            <person name="Rasschaert D."/>
            <person name="Gelfi J."/>
            <person name="Laude H."/>
        </authorList>
    </citation>
    <scope>NUCLEOTIDE SEQUENCE [GENOMIC RNA]</scope>
</reference>
<reference key="2">
    <citation type="journal article" date="1989" name="Virus Genes">
        <title>Nucleotide sequence between the peplomer and matrix protein genes of the porcine transmissible gastroenteritis coronavirus identifies three large open reading frames.</title>
        <authorList>
            <person name="Kapke P.A."/>
            <person name="Tung F.Y."/>
            <person name="Brian D.A."/>
        </authorList>
    </citation>
    <scope>NUCLEOTIDE SEQUENCE [GENOMIC RNA]</scope>
</reference>
<reference key="3">
    <citation type="journal article" date="2000" name="Proc. Natl. Acad. Sci. U.S.A.">
        <title>Engineering the largest RNA virus genome as an infectious bacterial artificial chromosome.</title>
        <authorList>
            <person name="Almazan F."/>
            <person name="Gonzalez J.M."/>
            <person name="Penzes Z."/>
            <person name="Izeta A."/>
            <person name="Calvo E."/>
            <person name="Plana-Duran J."/>
            <person name="Enjuanes L."/>
        </authorList>
    </citation>
    <scope>NUCLEOTIDE SEQUENCE [GENOMIC RNA]</scope>
    <source>
        <strain>Isolate PUR46-MAD</strain>
    </source>
</reference>
<reference key="4">
    <citation type="submission" date="2006-03" db="EMBL/GenBank/DDBJ databases">
        <title>Cloning and Seqence Analysis of Genome of Transmissible gastroenteritis virus SC-Y strain.</title>
        <authorList>
            <person name="Song Z.H."/>
            <person name="Guo W.Z."/>
            <person name="Yin H.P."/>
            <person name="Zeng Z.Y."/>
            <person name="Ou Y."/>
            <person name="Han G.Q."/>
            <person name="Sun Z.Y."/>
        </authorList>
    </citation>
    <scope>NUCLEOTIDE SEQUENCE [GENOMIC RNA]</scope>
    <source>
        <strain>Isolate SC-Y</strain>
    </source>
</reference>